<sequence length="446" mass="50857">MPKRTFTKDDIRKFAEEENVRYLRLQFTDILGTIKNVEVPVSQLEKVLDNEMMFDGSSIEGFVRIEESDMYLHPDLDTWVIFPWTAGQGKVARLICDVYKTDGTPFEGDPRANLKRVLKEMEDLGFTDFNLGPEPEFFLFKLDEKGEPTLELNDDGGYFDLAPTDLGENCRRDIVLELEDMGFDIEASHHEVAPGQHEIDFKYADAVTACDNIQTFKLVVKTIARKHNLHATFMPKPLFGVNGSGMHFNVSLFKGKENAFFDPNTEMGLTETAYQFTAGVLKNARGFTAVCNPLVNSYKRLVPGYEAPCYIAWSGKNRSPLIRVPSSRGLSTRIEVRSVDPAANPYMALAAILESGLDGIKNKLKVPEPVNQNIYEMNREEREAVGIQDLPSTLYTALKAMRENEVIKKALGNHIYNQFINSKSIEWDYYRTQVSEWERDQYMKQY</sequence>
<proteinExistence type="inferred from homology"/>
<protein>
    <recommendedName>
        <fullName evidence="2">Glutamine synthetase</fullName>
        <shortName evidence="2">GS</shortName>
        <ecNumber evidence="2">6.3.1.2</ecNumber>
    </recommendedName>
    <alternativeName>
        <fullName evidence="2">Glutamate--ammonia ligase</fullName>
    </alternativeName>
    <alternativeName>
        <fullName evidence="2">Glutamine synthetase I alpha</fullName>
        <shortName evidence="2">GSI alpha</shortName>
    </alternativeName>
</protein>
<evidence type="ECO:0000250" key="1">
    <source>
        <dbReference type="UniProtKB" id="P0A1P6"/>
    </source>
</evidence>
<evidence type="ECO:0000250" key="2">
    <source>
        <dbReference type="UniProtKB" id="P12425"/>
    </source>
</evidence>
<evidence type="ECO:0000250" key="3">
    <source>
        <dbReference type="UniProtKB" id="P77961"/>
    </source>
</evidence>
<evidence type="ECO:0000250" key="4">
    <source>
        <dbReference type="UniProtKB" id="P9WN39"/>
    </source>
</evidence>
<evidence type="ECO:0000255" key="5">
    <source>
        <dbReference type="PROSITE-ProRule" id="PRU01330"/>
    </source>
</evidence>
<evidence type="ECO:0000255" key="6">
    <source>
        <dbReference type="PROSITE-ProRule" id="PRU01331"/>
    </source>
</evidence>
<evidence type="ECO:0000305" key="7"/>
<name>GLN1A_STAAR</name>
<reference key="1">
    <citation type="journal article" date="2004" name="Proc. Natl. Acad. Sci. U.S.A.">
        <title>Complete genomes of two clinical Staphylococcus aureus strains: evidence for the rapid evolution of virulence and drug resistance.</title>
        <authorList>
            <person name="Holden M.T.G."/>
            <person name="Feil E.J."/>
            <person name="Lindsay J.A."/>
            <person name="Peacock S.J."/>
            <person name="Day N.P.J."/>
            <person name="Enright M.C."/>
            <person name="Foster T.J."/>
            <person name="Moore C.E."/>
            <person name="Hurst L."/>
            <person name="Atkin R."/>
            <person name="Barron A."/>
            <person name="Bason N."/>
            <person name="Bentley S.D."/>
            <person name="Chillingworth C."/>
            <person name="Chillingworth T."/>
            <person name="Churcher C."/>
            <person name="Clark L."/>
            <person name="Corton C."/>
            <person name="Cronin A."/>
            <person name="Doggett J."/>
            <person name="Dowd L."/>
            <person name="Feltwell T."/>
            <person name="Hance Z."/>
            <person name="Harris B."/>
            <person name="Hauser H."/>
            <person name="Holroyd S."/>
            <person name="Jagels K."/>
            <person name="James K.D."/>
            <person name="Lennard N."/>
            <person name="Line A."/>
            <person name="Mayes R."/>
            <person name="Moule S."/>
            <person name="Mungall K."/>
            <person name="Ormond D."/>
            <person name="Quail M.A."/>
            <person name="Rabbinowitsch E."/>
            <person name="Rutherford K.M."/>
            <person name="Sanders M."/>
            <person name="Sharp S."/>
            <person name="Simmonds M."/>
            <person name="Stevens K."/>
            <person name="Whitehead S."/>
            <person name="Barrell B.G."/>
            <person name="Spratt B.G."/>
            <person name="Parkhill J."/>
        </authorList>
    </citation>
    <scope>NUCLEOTIDE SEQUENCE [LARGE SCALE GENOMIC DNA]</scope>
    <source>
        <strain>MRSA252</strain>
    </source>
</reference>
<feature type="chain" id="PRO_0000153260" description="Glutamine synthetase">
    <location>
        <begin position="1"/>
        <end position="446"/>
    </location>
</feature>
<feature type="domain" description="GS beta-grasp" evidence="5">
    <location>
        <begin position="18"/>
        <end position="103"/>
    </location>
</feature>
<feature type="domain" description="GS catalytic" evidence="6">
    <location>
        <begin position="110"/>
        <end position="446"/>
    </location>
</feature>
<feature type="binding site" evidence="2">
    <location>
        <position position="134"/>
    </location>
    <ligand>
        <name>Mg(2+)</name>
        <dbReference type="ChEBI" id="CHEBI:18420"/>
        <label>1</label>
    </ligand>
</feature>
<feature type="binding site" evidence="2">
    <location>
        <position position="136"/>
    </location>
    <ligand>
        <name>Mg(2+)</name>
        <dbReference type="ChEBI" id="CHEBI:18420"/>
        <label>2</label>
    </ligand>
</feature>
<feature type="binding site" evidence="4">
    <location>
        <position position="186"/>
    </location>
    <ligand>
        <name>ATP</name>
        <dbReference type="ChEBI" id="CHEBI:30616"/>
    </ligand>
</feature>
<feature type="binding site" evidence="2">
    <location>
        <position position="191"/>
    </location>
    <ligand>
        <name>Mg(2+)</name>
        <dbReference type="ChEBI" id="CHEBI:18420"/>
        <label>2</label>
    </ligand>
</feature>
<feature type="binding site" evidence="2">
    <location>
        <position position="198"/>
    </location>
    <ligand>
        <name>Mg(2+)</name>
        <dbReference type="ChEBI" id="CHEBI:18420"/>
        <label>2</label>
    </ligand>
</feature>
<feature type="binding site" evidence="4">
    <location>
        <begin position="242"/>
        <end position="243"/>
    </location>
    <ligand>
        <name>L-glutamate</name>
        <dbReference type="ChEBI" id="CHEBI:29985"/>
    </ligand>
</feature>
<feature type="binding site" evidence="2">
    <location>
        <position position="243"/>
    </location>
    <ligand>
        <name>L-glutamate</name>
        <dbReference type="ChEBI" id="CHEBI:29985"/>
    </ligand>
</feature>
<feature type="binding site" evidence="2">
    <location>
        <position position="247"/>
    </location>
    <ligand>
        <name>Mg(2+)</name>
        <dbReference type="ChEBI" id="CHEBI:18420"/>
        <label>1</label>
    </ligand>
</feature>
<feature type="binding site" evidence="3">
    <location>
        <position position="251"/>
    </location>
    <ligand>
        <name>ATP</name>
        <dbReference type="ChEBI" id="CHEBI:30616"/>
    </ligand>
</feature>
<feature type="binding site" evidence="1">
    <location>
        <position position="300"/>
    </location>
    <ligand>
        <name>L-glutamate</name>
        <dbReference type="ChEBI" id="CHEBI:29985"/>
    </ligand>
</feature>
<feature type="binding site" evidence="1">
    <location>
        <position position="306"/>
    </location>
    <ligand>
        <name>L-glutamate</name>
        <dbReference type="ChEBI" id="CHEBI:29985"/>
    </ligand>
</feature>
<feature type="binding site" evidence="4">
    <location>
        <position position="318"/>
    </location>
    <ligand>
        <name>ATP</name>
        <dbReference type="ChEBI" id="CHEBI:30616"/>
    </ligand>
</feature>
<feature type="binding site" evidence="4">
    <location>
        <position position="318"/>
    </location>
    <ligand>
        <name>L-glutamate</name>
        <dbReference type="ChEBI" id="CHEBI:29985"/>
    </ligand>
</feature>
<feature type="binding site" evidence="4">
    <location>
        <position position="323"/>
    </location>
    <ligand>
        <name>ATP</name>
        <dbReference type="ChEBI" id="CHEBI:30616"/>
    </ligand>
</feature>
<feature type="binding site" evidence="2">
    <location>
        <position position="335"/>
    </location>
    <ligand>
        <name>Mg(2+)</name>
        <dbReference type="ChEBI" id="CHEBI:18420"/>
        <label>1</label>
    </ligand>
</feature>
<feature type="binding site" evidence="1">
    <location>
        <position position="337"/>
    </location>
    <ligand>
        <name>L-glutamate</name>
        <dbReference type="ChEBI" id="CHEBI:29985"/>
    </ligand>
</feature>
<feature type="site" description="Important for inhibition by glutamine" evidence="2">
    <location>
        <position position="64"/>
    </location>
</feature>
<organism>
    <name type="scientific">Staphylococcus aureus (strain MRSA252)</name>
    <dbReference type="NCBI Taxonomy" id="282458"/>
    <lineage>
        <taxon>Bacteria</taxon>
        <taxon>Bacillati</taxon>
        <taxon>Bacillota</taxon>
        <taxon>Bacilli</taxon>
        <taxon>Bacillales</taxon>
        <taxon>Staphylococcaceae</taxon>
        <taxon>Staphylococcus</taxon>
    </lineage>
</organism>
<gene>
    <name evidence="2" type="primary">glnA</name>
    <name type="ordered locus">SAR1284</name>
</gene>
<accession>Q6GHC6</accession>
<keyword id="KW-0067">ATP-binding</keyword>
<keyword id="KW-0963">Cytoplasm</keyword>
<keyword id="KW-0436">Ligase</keyword>
<keyword id="KW-0460">Magnesium</keyword>
<keyword id="KW-0479">Metal-binding</keyword>
<keyword id="KW-0547">Nucleotide-binding</keyword>
<dbReference type="EC" id="6.3.1.2" evidence="2"/>
<dbReference type="EMBL" id="BX571856">
    <property type="protein sequence ID" value="CAG40287.1"/>
    <property type="molecule type" value="Genomic_DNA"/>
</dbReference>
<dbReference type="RefSeq" id="WP_001126604.1">
    <property type="nucleotide sequence ID" value="NC_002952.2"/>
</dbReference>
<dbReference type="SMR" id="Q6GHC6"/>
<dbReference type="KEGG" id="sar:SAR1284"/>
<dbReference type="HOGENOM" id="CLU_017290_1_3_9"/>
<dbReference type="Proteomes" id="UP000000596">
    <property type="component" value="Chromosome"/>
</dbReference>
<dbReference type="GO" id="GO:0005737">
    <property type="term" value="C:cytoplasm"/>
    <property type="evidence" value="ECO:0007669"/>
    <property type="project" value="UniProtKB-SubCell"/>
</dbReference>
<dbReference type="GO" id="GO:0005524">
    <property type="term" value="F:ATP binding"/>
    <property type="evidence" value="ECO:0007669"/>
    <property type="project" value="UniProtKB-KW"/>
</dbReference>
<dbReference type="GO" id="GO:0004356">
    <property type="term" value="F:glutamine synthetase activity"/>
    <property type="evidence" value="ECO:0007669"/>
    <property type="project" value="UniProtKB-EC"/>
</dbReference>
<dbReference type="GO" id="GO:0046872">
    <property type="term" value="F:metal ion binding"/>
    <property type="evidence" value="ECO:0007669"/>
    <property type="project" value="UniProtKB-KW"/>
</dbReference>
<dbReference type="GO" id="GO:0006542">
    <property type="term" value="P:glutamine biosynthetic process"/>
    <property type="evidence" value="ECO:0007669"/>
    <property type="project" value="InterPro"/>
</dbReference>
<dbReference type="FunFam" id="3.10.20.70:FF:000005">
    <property type="entry name" value="Glutamine synthetase"/>
    <property type="match status" value="1"/>
</dbReference>
<dbReference type="FunFam" id="3.30.590.10:FF:000003">
    <property type="entry name" value="Glutamine synthetase 2"/>
    <property type="match status" value="1"/>
</dbReference>
<dbReference type="Gene3D" id="3.10.20.70">
    <property type="entry name" value="Glutamine synthetase, N-terminal domain"/>
    <property type="match status" value="1"/>
</dbReference>
<dbReference type="Gene3D" id="3.30.590.10">
    <property type="entry name" value="Glutamine synthetase/guanido kinase, catalytic domain"/>
    <property type="match status" value="1"/>
</dbReference>
<dbReference type="InterPro" id="IPR008147">
    <property type="entry name" value="Gln_synt_N"/>
</dbReference>
<dbReference type="InterPro" id="IPR036651">
    <property type="entry name" value="Gln_synt_N_sf"/>
</dbReference>
<dbReference type="InterPro" id="IPR014746">
    <property type="entry name" value="Gln_synth/guanido_kin_cat_dom"/>
</dbReference>
<dbReference type="InterPro" id="IPR008146">
    <property type="entry name" value="Gln_synth_cat_dom"/>
</dbReference>
<dbReference type="InterPro" id="IPR027303">
    <property type="entry name" value="Gln_synth_gly_rich_site"/>
</dbReference>
<dbReference type="InterPro" id="IPR004809">
    <property type="entry name" value="Gln_synth_I"/>
</dbReference>
<dbReference type="InterPro" id="IPR027302">
    <property type="entry name" value="Gln_synth_N_conserv_site"/>
</dbReference>
<dbReference type="NCBIfam" id="TIGR00653">
    <property type="entry name" value="GlnA"/>
    <property type="match status" value="1"/>
</dbReference>
<dbReference type="PANTHER" id="PTHR43785">
    <property type="entry name" value="GAMMA-GLUTAMYLPUTRESCINE SYNTHETASE"/>
    <property type="match status" value="1"/>
</dbReference>
<dbReference type="PANTHER" id="PTHR43785:SF12">
    <property type="entry name" value="TYPE-1 GLUTAMINE SYNTHETASE 2"/>
    <property type="match status" value="1"/>
</dbReference>
<dbReference type="Pfam" id="PF00120">
    <property type="entry name" value="Gln-synt_C"/>
    <property type="match status" value="1"/>
</dbReference>
<dbReference type="Pfam" id="PF03951">
    <property type="entry name" value="Gln-synt_N"/>
    <property type="match status" value="1"/>
</dbReference>
<dbReference type="SMART" id="SM01230">
    <property type="entry name" value="Gln-synt_C"/>
    <property type="match status" value="1"/>
</dbReference>
<dbReference type="SUPFAM" id="SSF54368">
    <property type="entry name" value="Glutamine synthetase, N-terminal domain"/>
    <property type="match status" value="1"/>
</dbReference>
<dbReference type="SUPFAM" id="SSF55931">
    <property type="entry name" value="Glutamine synthetase/guanido kinase"/>
    <property type="match status" value="1"/>
</dbReference>
<dbReference type="PROSITE" id="PS00180">
    <property type="entry name" value="GLNA_1"/>
    <property type="match status" value="1"/>
</dbReference>
<dbReference type="PROSITE" id="PS00181">
    <property type="entry name" value="GLNA_ATP"/>
    <property type="match status" value="1"/>
</dbReference>
<dbReference type="PROSITE" id="PS51986">
    <property type="entry name" value="GS_BETA_GRASP"/>
    <property type="match status" value="1"/>
</dbReference>
<dbReference type="PROSITE" id="PS51987">
    <property type="entry name" value="GS_CATALYTIC"/>
    <property type="match status" value="1"/>
</dbReference>
<comment type="function">
    <text evidence="2">Glutamine synthetase (GS) is an unusual multitasking protein that functions as an enzyme, a transcription coregulator, and a chaperone in ammonium assimilation and in the regulation of genes involved in nitrogen metabolism. It catalyzes the ATP-dependent biosynthesis of glutamine from glutamate and ammonia. Feedback-inhibited GlnA also interacts with and regulates the activity of the transcriptional regulator TnrA. During nitrogen limitation, TnrA is in its DNA-binding active state and turns on the transcription of genes required for nitrogen assimilation. Under conditions of nitrogen excess, feedback-inhibited GlnA forms a stable complex with TnrA, which inhibits its DNA-binding activity. In contrast, feedback-inhibited GlnA acts as a chaperone to stabilize the DNA-binding activity of GlnR, which represses the transcription of nitrogen assimilation genes.</text>
</comment>
<comment type="catalytic activity">
    <reaction evidence="2">
        <text>L-glutamate + NH4(+) + ATP = L-glutamine + ADP + phosphate + H(+)</text>
        <dbReference type="Rhea" id="RHEA:16169"/>
        <dbReference type="ChEBI" id="CHEBI:15378"/>
        <dbReference type="ChEBI" id="CHEBI:28938"/>
        <dbReference type="ChEBI" id="CHEBI:29985"/>
        <dbReference type="ChEBI" id="CHEBI:30616"/>
        <dbReference type="ChEBI" id="CHEBI:43474"/>
        <dbReference type="ChEBI" id="CHEBI:58359"/>
        <dbReference type="ChEBI" id="CHEBI:456216"/>
        <dbReference type="EC" id="6.3.1.2"/>
    </reaction>
</comment>
<comment type="cofactor">
    <cofactor evidence="2">
        <name>Mg(2+)</name>
        <dbReference type="ChEBI" id="CHEBI:18420"/>
    </cofactor>
    <text evidence="2">Binds 2 Mg(2+) ions per subunit.</text>
</comment>
<comment type="activity regulation">
    <text evidence="2">Inhibited by glutamine.</text>
</comment>
<comment type="subunit">
    <text evidence="2">Oligomer of 12 subunits arranged in the form of two hexagons. In its feedback-inhibited form, interacts with TnrA in order to block its DNA-binding activity.</text>
</comment>
<comment type="subcellular location">
    <subcellularLocation>
        <location evidence="2">Cytoplasm</location>
    </subcellularLocation>
</comment>
<comment type="similarity">
    <text evidence="7">Belongs to the glutamine synthetase family.</text>
</comment>